<feature type="chain" id="PRO_0000283628" description="Protein PLASTID MOVEMENT IMPAIRED 15">
    <location>
        <begin position="1"/>
        <end position="579"/>
    </location>
</feature>
<feature type="coiled-coil region" evidence="1">
    <location>
        <begin position="90"/>
        <end position="161"/>
    </location>
</feature>
<feature type="coiled-coil region" evidence="1">
    <location>
        <begin position="188"/>
        <end position="216"/>
    </location>
</feature>
<feature type="coiled-coil region" evidence="1">
    <location>
        <begin position="383"/>
        <end position="419"/>
    </location>
</feature>
<feature type="coiled-coil region" evidence="1">
    <location>
        <begin position="481"/>
        <end position="501"/>
    </location>
</feature>
<keyword id="KW-0175">Coiled coil</keyword>
<keyword id="KW-1185">Reference proteome</keyword>
<protein>
    <recommendedName>
        <fullName>Protein PLASTID MOVEMENT IMPAIRED 15</fullName>
    </recommendedName>
</protein>
<accession>Q9FF41</accession>
<comment type="function">
    <text evidence="2">Required for the chloroplast avoidance response under high intensity blue light. This avoidance response consists in the relocation of chloroplasts on the anticlinal side of exposed cells.</text>
</comment>
<comment type="similarity">
    <text evidence="3">Belongs to the WEB family.</text>
</comment>
<comment type="sequence caution" evidence="3">
    <conflict type="erroneous gene model prediction">
        <sequence resource="EMBL-CDS" id="BAB11282"/>
    </conflict>
</comment>
<gene>
    <name type="primary">PMI15</name>
    <name type="ordered locus">At5g38150</name>
    <name type="ORF">MXA21.20</name>
</gene>
<dbReference type="EMBL" id="AB005247">
    <property type="protein sequence ID" value="BAB11282.1"/>
    <property type="status" value="ALT_SEQ"/>
    <property type="molecule type" value="Genomic_DNA"/>
</dbReference>
<dbReference type="EMBL" id="CP002688">
    <property type="status" value="NOT_ANNOTATED_CDS"/>
    <property type="molecule type" value="Genomic_DNA"/>
</dbReference>
<dbReference type="SMR" id="Q9FF41"/>
<dbReference type="FunCoup" id="Q9FF41">
    <property type="interactions" value="47"/>
</dbReference>
<dbReference type="STRING" id="3702.Q9FF41"/>
<dbReference type="iPTMnet" id="Q9FF41"/>
<dbReference type="PaxDb" id="3702-AT5G38150.1"/>
<dbReference type="EnsemblPlants" id="AT5G38150.1">
    <property type="protein sequence ID" value="AT5G38150.1"/>
    <property type="gene ID" value="AT5G38150"/>
</dbReference>
<dbReference type="Gramene" id="AT5G38150.1">
    <property type="protein sequence ID" value="AT5G38150.1"/>
    <property type="gene ID" value="AT5G38150"/>
</dbReference>
<dbReference type="Araport" id="AT5G38150"/>
<dbReference type="TAIR" id="AT5G38150">
    <property type="gene designation" value="PMI15"/>
</dbReference>
<dbReference type="eggNOG" id="ENOG502QR0X">
    <property type="taxonomic scope" value="Eukaryota"/>
</dbReference>
<dbReference type="HOGENOM" id="CLU_017212_1_0_1"/>
<dbReference type="InParanoid" id="Q9FF41"/>
<dbReference type="OMA" id="HCSTITI"/>
<dbReference type="PRO" id="PR:Q9FF41"/>
<dbReference type="Proteomes" id="UP000006548">
    <property type="component" value="Chromosome 5"/>
</dbReference>
<dbReference type="ExpressionAtlas" id="Q9FF41">
    <property type="expression patterns" value="baseline and differential"/>
</dbReference>
<dbReference type="GO" id="GO:0009903">
    <property type="term" value="P:chloroplast avoidance movement"/>
    <property type="evidence" value="ECO:0000315"/>
    <property type="project" value="TAIR"/>
</dbReference>
<dbReference type="GO" id="GO:0009637">
    <property type="term" value="P:response to blue light"/>
    <property type="evidence" value="ECO:0000315"/>
    <property type="project" value="TAIR"/>
</dbReference>
<dbReference type="InterPro" id="IPR008545">
    <property type="entry name" value="Web"/>
</dbReference>
<dbReference type="PANTHER" id="PTHR32054">
    <property type="entry name" value="HEAVY CHAIN, PUTATIVE, EXPRESSED-RELATED-RELATED"/>
    <property type="match status" value="1"/>
</dbReference>
<dbReference type="PANTHER" id="PTHR32054:SF97">
    <property type="entry name" value="PROTEIN PLASTID MOVEMENT IMPAIRED 15"/>
    <property type="match status" value="1"/>
</dbReference>
<dbReference type="Pfam" id="PF05701">
    <property type="entry name" value="WEMBL"/>
    <property type="match status" value="1"/>
</dbReference>
<organism>
    <name type="scientific">Arabidopsis thaliana</name>
    <name type="common">Mouse-ear cress</name>
    <dbReference type="NCBI Taxonomy" id="3702"/>
    <lineage>
        <taxon>Eukaryota</taxon>
        <taxon>Viridiplantae</taxon>
        <taxon>Streptophyta</taxon>
        <taxon>Embryophyta</taxon>
        <taxon>Tracheophyta</taxon>
        <taxon>Spermatophyta</taxon>
        <taxon>Magnoliopsida</taxon>
        <taxon>eudicotyledons</taxon>
        <taxon>Gunneridae</taxon>
        <taxon>Pentapetalae</taxon>
        <taxon>rosids</taxon>
        <taxon>malvids</taxon>
        <taxon>Brassicales</taxon>
        <taxon>Brassicaceae</taxon>
        <taxon>Camelineae</taxon>
        <taxon>Arabidopsis</taxon>
    </lineage>
</organism>
<evidence type="ECO:0000255" key="1"/>
<evidence type="ECO:0000269" key="2">
    <source>
    </source>
</evidence>
<evidence type="ECO:0000305" key="3"/>
<reference key="1">
    <citation type="journal article" date="1997" name="DNA Res.">
        <title>Structural analysis of Arabidopsis thaliana chromosome 5. I. Sequence features of the 1.6 Mb regions covered by twenty physically assigned P1 clones.</title>
        <authorList>
            <person name="Sato S."/>
            <person name="Kotani H."/>
            <person name="Nakamura Y."/>
            <person name="Kaneko T."/>
            <person name="Asamizu E."/>
            <person name="Fukami M."/>
            <person name="Miyajima N."/>
            <person name="Tabata S."/>
        </authorList>
    </citation>
    <scope>NUCLEOTIDE SEQUENCE [LARGE SCALE GENOMIC DNA]</scope>
    <source>
        <strain>cv. Columbia</strain>
    </source>
</reference>
<reference key="2">
    <citation type="journal article" date="2017" name="Plant J.">
        <title>Araport11: a complete reannotation of the Arabidopsis thaliana reference genome.</title>
        <authorList>
            <person name="Cheng C.Y."/>
            <person name="Krishnakumar V."/>
            <person name="Chan A.P."/>
            <person name="Thibaud-Nissen F."/>
            <person name="Schobel S."/>
            <person name="Town C.D."/>
        </authorList>
    </citation>
    <scope>GENOME REANNOTATION</scope>
    <source>
        <strain>cv. Columbia</strain>
    </source>
</reference>
<reference key="3">
    <citation type="journal article" date="2006" name="Plant Physiol.">
        <title>Plastid movement impaired 2, a new gene involved in normal blue-light-induced chloroplast movements in Arabidopsis.</title>
        <authorList>
            <person name="Luesse D.R."/>
            <person name="Deblasio S.L."/>
            <person name="Hangarter R.P."/>
        </authorList>
    </citation>
    <scope>FUNCTION</scope>
</reference>
<reference key="4">
    <citation type="journal article" date="2010" name="Proc. Natl. Acad. Sci. U.S.A.">
        <title>Two interacting coiled-coil proteins, WEB1 and PMI2, maintain the chloroplast photorelocation movement velocity in Arabidopsis.</title>
        <authorList>
            <person name="Kodama Y."/>
            <person name="Suetsugu N."/>
            <person name="Kong S.G."/>
            <person name="Wada M."/>
        </authorList>
    </citation>
    <scope>GENE FAMILY</scope>
</reference>
<proteinExistence type="evidence at transcript level"/>
<sequence length="579" mass="66688">MLNRAMENSDMKRNSSTLLDLPVVKSSLVVEAIHMSRKKLGWYNESRRDSETVKARVEAGLSEVKKSVEELALLIKRSNRSAGFQEKDMEVLKMEEKYAEVMRVLEVVKEEVSRVKLDVSSVLIERVAAEEKVEELRFKTEGGLRLLESLKKEIEVANEEHLMVALGKIEALKGYKEIERQREGKAIKVLDLLVERNKRIKNMLEEAERSKDIEIELFETSTDVEMLETQLKLFKKMERRVQGRDSSSMSRSNRSFGRGKYSLSVLKEVTEGKKEELASVKVEIFRVMTVMDALRNEIIRARDETACLGKILREDDVKIEKLNSKILIEKSKLEVVSIAEERISSLAENFVGSLEKIKKSRNAAKKEEFLFKEEKTVTKAETQKTKLDIDKKESELNSKLDELEKVKHTEALVLEKLESLVEDMMESREMESEHCSTITISRFEYEYLSKHASQAEETAEKKVAAAAAWVEALKASTKSFLMKTETLMRESEMTKAEEEREVFRMERSLSTKRLVEGEIQKIKRNSEAEGYISPKPVGKFTPVQRGKPRRYSSVGTPTFFVIKKKKKVPRLAKFFSRRS</sequence>
<name>PMI15_ARATH</name>